<gene>
    <name evidence="3" type="primary">smoB</name>
    <name evidence="5" type="ordered locus">Atu3278</name>
</gene>
<feature type="chain" id="PRO_0000458917" description="6-dehydroglucose reductase">
    <location>
        <begin position="1"/>
        <end position="297"/>
    </location>
</feature>
<feature type="active site" description="Proton donor" evidence="1">
    <location>
        <position position="54"/>
    </location>
</feature>
<feature type="binding site" evidence="2 10">
    <location>
        <position position="20"/>
    </location>
    <ligand>
        <name>NADP(+)</name>
        <dbReference type="ChEBI" id="CHEBI:58349"/>
    </ligand>
</feature>
<feature type="binding site" evidence="2 10">
    <location>
        <position position="21"/>
    </location>
    <ligand>
        <name>NADP(+)</name>
        <dbReference type="ChEBI" id="CHEBI:58349"/>
    </ligand>
</feature>
<feature type="binding site" evidence="2 10">
    <location>
        <position position="49"/>
    </location>
    <ligand>
        <name>NADP(+)</name>
        <dbReference type="ChEBI" id="CHEBI:58349"/>
    </ligand>
</feature>
<feature type="binding site" evidence="2 10">
    <location>
        <position position="54"/>
    </location>
    <ligand>
        <name>D-glucose</name>
        <dbReference type="ChEBI" id="CHEBI:4167"/>
    </ligand>
</feature>
<feature type="binding site" evidence="2 10">
    <location>
        <position position="98"/>
    </location>
    <ligand>
        <name>D-glucose</name>
        <dbReference type="ChEBI" id="CHEBI:4167"/>
    </ligand>
</feature>
<feature type="binding site" evidence="2 10">
    <location>
        <position position="129"/>
    </location>
    <ligand>
        <name>D-glucose</name>
        <dbReference type="ChEBI" id="CHEBI:4167"/>
    </ligand>
</feature>
<feature type="binding site" evidence="2 10">
    <location>
        <position position="130"/>
    </location>
    <ligand>
        <name>D-glucose</name>
        <dbReference type="ChEBI" id="CHEBI:4167"/>
    </ligand>
</feature>
<feature type="binding site" evidence="2 10">
    <location>
        <position position="159"/>
    </location>
    <ligand>
        <name>NADP(+)</name>
        <dbReference type="ChEBI" id="CHEBI:58349"/>
    </ligand>
</feature>
<feature type="binding site" evidence="2 10">
    <location>
        <position position="160"/>
    </location>
    <ligand>
        <name>NADP(+)</name>
        <dbReference type="ChEBI" id="CHEBI:58349"/>
    </ligand>
</feature>
<feature type="binding site" evidence="2 10">
    <location>
        <position position="181"/>
    </location>
    <ligand>
        <name>NADP(+)</name>
        <dbReference type="ChEBI" id="CHEBI:58349"/>
    </ligand>
</feature>
<feature type="binding site" evidence="2 10">
    <location>
        <position position="211"/>
    </location>
    <ligand>
        <name>NADP(+)</name>
        <dbReference type="ChEBI" id="CHEBI:58349"/>
    </ligand>
</feature>
<feature type="binding site" evidence="2 10">
    <location>
        <position position="213"/>
    </location>
    <ligand>
        <name>NADP(+)</name>
        <dbReference type="ChEBI" id="CHEBI:58349"/>
    </ligand>
</feature>
<feature type="binding site" evidence="2 10">
    <location>
        <position position="215"/>
    </location>
    <ligand>
        <name>NADP(+)</name>
        <dbReference type="ChEBI" id="CHEBI:58349"/>
    </ligand>
</feature>
<feature type="binding site" evidence="2 10">
    <location>
        <position position="261"/>
    </location>
    <ligand>
        <name>NADP(+)</name>
        <dbReference type="ChEBI" id="CHEBI:58349"/>
    </ligand>
</feature>
<feature type="binding site" evidence="2 10">
    <location>
        <position position="262"/>
    </location>
    <ligand>
        <name>NADP(+)</name>
        <dbReference type="ChEBI" id="CHEBI:58349"/>
    </ligand>
</feature>
<feature type="binding site" evidence="2 10">
    <location>
        <position position="263"/>
    </location>
    <ligand>
        <name>NADP(+)</name>
        <dbReference type="ChEBI" id="CHEBI:58349"/>
    </ligand>
</feature>
<feature type="binding site" evidence="2 10">
    <location>
        <position position="267"/>
    </location>
    <ligand>
        <name>NADP(+)</name>
        <dbReference type="ChEBI" id="CHEBI:58349"/>
    </ligand>
</feature>
<feature type="strand" evidence="12">
    <location>
        <begin position="3"/>
        <end position="7"/>
    </location>
</feature>
<feature type="strand" evidence="12">
    <location>
        <begin position="10"/>
        <end position="18"/>
    </location>
</feature>
<feature type="turn" evidence="12">
    <location>
        <begin position="20"/>
        <end position="24"/>
    </location>
</feature>
<feature type="helix" evidence="12">
    <location>
        <begin position="30"/>
        <end position="41"/>
    </location>
</feature>
<feature type="turn" evidence="12">
    <location>
        <begin position="42"/>
        <end position="44"/>
    </location>
</feature>
<feature type="strand" evidence="12">
    <location>
        <begin position="47"/>
        <end position="49"/>
    </location>
</feature>
<feature type="helix" evidence="12">
    <location>
        <begin position="54"/>
        <end position="57"/>
    </location>
</feature>
<feature type="helix" evidence="12">
    <location>
        <begin position="59"/>
        <end position="68"/>
    </location>
</feature>
<feature type="helix" evidence="12">
    <location>
        <begin position="74"/>
        <end position="76"/>
    </location>
</feature>
<feature type="strand" evidence="12">
    <location>
        <begin position="77"/>
        <end position="83"/>
    </location>
</feature>
<feature type="helix" evidence="11">
    <location>
        <begin position="90"/>
        <end position="92"/>
    </location>
</feature>
<feature type="helix" evidence="12">
    <location>
        <begin position="104"/>
        <end position="118"/>
    </location>
</feature>
<feature type="strand" evidence="12">
    <location>
        <begin position="123"/>
        <end position="128"/>
    </location>
</feature>
<feature type="helix" evidence="12">
    <location>
        <begin position="137"/>
        <end position="149"/>
    </location>
</feature>
<feature type="strand" evidence="12">
    <location>
        <begin position="152"/>
        <end position="160"/>
    </location>
</feature>
<feature type="helix" evidence="12">
    <location>
        <begin position="163"/>
        <end position="171"/>
    </location>
</feature>
<feature type="strand" evidence="12">
    <location>
        <begin position="180"/>
        <end position="183"/>
    </location>
</feature>
<feature type="helix" evidence="12">
    <location>
        <begin position="190"/>
        <end position="192"/>
    </location>
</feature>
<feature type="helix" evidence="12">
    <location>
        <begin position="196"/>
        <end position="203"/>
    </location>
</feature>
<feature type="strand" evidence="12">
    <location>
        <begin position="207"/>
        <end position="211"/>
    </location>
</feature>
<feature type="helix" evidence="12">
    <location>
        <begin position="214"/>
        <end position="219"/>
    </location>
</feature>
<feature type="strand" evidence="12">
    <location>
        <begin position="220"/>
        <end position="222"/>
    </location>
</feature>
<feature type="helix" evidence="12">
    <location>
        <begin position="224"/>
        <end position="237"/>
    </location>
</feature>
<feature type="helix" evidence="12">
    <location>
        <begin position="241"/>
        <end position="250"/>
    </location>
</feature>
<feature type="strand" evidence="12">
    <location>
        <begin position="257"/>
        <end position="260"/>
    </location>
</feature>
<feature type="helix" evidence="12">
    <location>
        <begin position="265"/>
        <end position="269"/>
    </location>
</feature>
<feature type="helix" evidence="12">
    <location>
        <begin position="270"/>
        <end position="276"/>
    </location>
</feature>
<feature type="helix" evidence="12">
    <location>
        <begin position="281"/>
        <end position="292"/>
    </location>
</feature>
<reference key="1">
    <citation type="journal article" date="2001" name="Science">
        <title>The genome of the natural genetic engineer Agrobacterium tumefaciens C58.</title>
        <authorList>
            <person name="Wood D.W."/>
            <person name="Setubal J.C."/>
            <person name="Kaul R."/>
            <person name="Monks D.E."/>
            <person name="Kitajima J.P."/>
            <person name="Okura V.K."/>
            <person name="Zhou Y."/>
            <person name="Chen L."/>
            <person name="Wood G.E."/>
            <person name="Almeida N.F. Jr."/>
            <person name="Woo L."/>
            <person name="Chen Y."/>
            <person name="Paulsen I.T."/>
            <person name="Eisen J.A."/>
            <person name="Karp P.D."/>
            <person name="Bovee D. Sr."/>
            <person name="Chapman P."/>
            <person name="Clendenning J."/>
            <person name="Deatherage G."/>
            <person name="Gillet W."/>
            <person name="Grant C."/>
            <person name="Kutyavin T."/>
            <person name="Levy R."/>
            <person name="Li M.-J."/>
            <person name="McClelland E."/>
            <person name="Palmieri A."/>
            <person name="Raymond C."/>
            <person name="Rouse G."/>
            <person name="Saenphimmachak C."/>
            <person name="Wu Z."/>
            <person name="Romero P."/>
            <person name="Gordon D."/>
            <person name="Zhang S."/>
            <person name="Yoo H."/>
            <person name="Tao Y."/>
            <person name="Biddle P."/>
            <person name="Jung M."/>
            <person name="Krespan W."/>
            <person name="Perry M."/>
            <person name="Gordon-Kamm B."/>
            <person name="Liao L."/>
            <person name="Kim S."/>
            <person name="Hendrick C."/>
            <person name="Zhao Z.-Y."/>
            <person name="Dolan M."/>
            <person name="Chumley F."/>
            <person name="Tingey S.V."/>
            <person name="Tomb J.-F."/>
            <person name="Gordon M.P."/>
            <person name="Olson M.V."/>
            <person name="Nester E.W."/>
        </authorList>
    </citation>
    <scope>NUCLEOTIDE SEQUENCE [LARGE SCALE GENOMIC DNA]</scope>
    <source>
        <strain>C58 / ATCC 33970</strain>
    </source>
</reference>
<reference key="2">
    <citation type="journal article" date="2001" name="Science">
        <title>Genome sequence of the plant pathogen and biotechnology agent Agrobacterium tumefaciens C58.</title>
        <authorList>
            <person name="Goodner B."/>
            <person name="Hinkle G."/>
            <person name="Gattung S."/>
            <person name="Miller N."/>
            <person name="Blanchard M."/>
            <person name="Qurollo B."/>
            <person name="Goldman B.S."/>
            <person name="Cao Y."/>
            <person name="Askenazi M."/>
            <person name="Halling C."/>
            <person name="Mullin L."/>
            <person name="Houmiel K."/>
            <person name="Gordon J."/>
            <person name="Vaudin M."/>
            <person name="Iartchouk O."/>
            <person name="Epp A."/>
            <person name="Liu F."/>
            <person name="Wollam C."/>
            <person name="Allinger M."/>
            <person name="Doughty D."/>
            <person name="Scott C."/>
            <person name="Lappas C."/>
            <person name="Markelz B."/>
            <person name="Flanagan C."/>
            <person name="Crowell C."/>
            <person name="Gurson J."/>
            <person name="Lomo C."/>
            <person name="Sear C."/>
            <person name="Strub G."/>
            <person name="Cielo C."/>
            <person name="Slater S."/>
        </authorList>
    </citation>
    <scope>NUCLEOTIDE SEQUENCE [LARGE SCALE GENOMIC DNA]</scope>
    <source>
        <strain>C58 / ATCC 33970</strain>
    </source>
</reference>
<reference evidence="6 7 8 9" key="3">
    <citation type="journal article" date="2022" name="Proc. Natl. Acad. Sci. U.S.A.">
        <title>Oxidative desulfurization pathway for complete catabolism of sulfoquinovose by bacteria.</title>
        <authorList>
            <person name="Sharma M."/>
            <person name="Lingford J.P."/>
            <person name="Petricevic M."/>
            <person name="Snow A.J.D."/>
            <person name="Zhang Y."/>
            <person name="Jaervaa M.A."/>
            <person name="Mui J.W."/>
            <person name="Scott N.E."/>
            <person name="Saunders E.C."/>
            <person name="Mao R."/>
            <person name="Epa R."/>
            <person name="da Silva B.M."/>
            <person name="Pires D.E.V."/>
            <person name="Ascher D.B."/>
            <person name="McConville M.J."/>
            <person name="Davies G.J."/>
            <person name="Williams S.J."/>
            <person name="Goddard-Borger E.D."/>
        </authorList>
    </citation>
    <scope>X-RAY CRYSTALLOGRAPHY (1.50 ANGSTROMS) OF APOPROTEIN AND IN COMPLEX WITH NADP AND D-GLUCOSE</scope>
    <scope>FUNCTION</scope>
    <scope>CATALYTIC ACTIVITY</scope>
    <scope>SUBUNIT</scope>
    <scope>INDUCTION</scope>
    <source>
        <strain>C58 / ATCC 33970</strain>
    </source>
</reference>
<protein>
    <recommendedName>
        <fullName evidence="4">6-dehydroglucose reductase</fullName>
        <ecNumber evidence="2">1.1.1.432</ecNumber>
    </recommendedName>
    <alternativeName>
        <fullName evidence="3">SQ monooxygenase cluster protein B</fullName>
    </alternativeName>
</protein>
<proteinExistence type="evidence at protein level"/>
<evidence type="ECO:0000250" key="1">
    <source>
        <dbReference type="UniProtKB" id="Q8CG76"/>
    </source>
</evidence>
<evidence type="ECO:0000269" key="2">
    <source>
    </source>
</evidence>
<evidence type="ECO:0000303" key="3">
    <source>
    </source>
</evidence>
<evidence type="ECO:0000305" key="4"/>
<evidence type="ECO:0000312" key="5">
    <source>
        <dbReference type="EMBL" id="AAK90112.1"/>
    </source>
</evidence>
<evidence type="ECO:0000312" key="6">
    <source>
        <dbReference type="PDB" id="7BC0"/>
    </source>
</evidence>
<evidence type="ECO:0000312" key="7">
    <source>
        <dbReference type="PDB" id="7BC1"/>
    </source>
</evidence>
<evidence type="ECO:0007744" key="8">
    <source>
        <dbReference type="PDB" id="7BBY"/>
    </source>
</evidence>
<evidence type="ECO:0007744" key="9">
    <source>
        <dbReference type="PDB" id="7BBZ"/>
    </source>
</evidence>
<evidence type="ECO:0007744" key="10">
    <source>
        <dbReference type="PDB" id="7BC1"/>
    </source>
</evidence>
<evidence type="ECO:0007829" key="11">
    <source>
        <dbReference type="PDB" id="7BBZ"/>
    </source>
</evidence>
<evidence type="ECO:0007829" key="12">
    <source>
        <dbReference type="PDB" id="7BC1"/>
    </source>
</evidence>
<name>DHGRD_AGRFC</name>
<organism>
    <name type="scientific">Agrobacterium fabrum (strain C58 / ATCC 33970)</name>
    <name type="common">Agrobacterium tumefaciens (strain C58)</name>
    <dbReference type="NCBI Taxonomy" id="176299"/>
    <lineage>
        <taxon>Bacteria</taxon>
        <taxon>Pseudomonadati</taxon>
        <taxon>Pseudomonadota</taxon>
        <taxon>Alphaproteobacteria</taxon>
        <taxon>Hyphomicrobiales</taxon>
        <taxon>Rhizobiaceae</taxon>
        <taxon>Rhizobium/Agrobacterium group</taxon>
        <taxon>Agrobacterium</taxon>
        <taxon>Agrobacterium tumefaciens complex</taxon>
    </lineage>
</organism>
<sequence length="297" mass="31912">MQRIALSDKLELSRIVYGMWRIGDDADTSPAHVQAKIEACLAQGITTMDQADIYGGYTAEAILGGGLKAAPGLRDKIEIVTKCGIVAPAGRHSSARVKHYDTTAGHINVSVEASLRDMGTDHVDLLLIHRPDPLIDAEETGKALDALVASGKVKAVGVSNFRPWDFSLLQSAMSNRLVTNQIEMSLLATDTFTNGDLAYLQEKRVSPMAWSPLGGGSLFSGAYGGTMAALQRIGKEQGVDATAVAIAWLLRHPAKIVPVLGTNNLERIRTAADALRVTMDRQTWFELYTLAIGKEVA</sequence>
<accession>A9CEY6</accession>
<keyword id="KW-0002">3D-structure</keyword>
<keyword id="KW-0119">Carbohydrate metabolism</keyword>
<keyword id="KW-0521">NADP</keyword>
<keyword id="KW-0560">Oxidoreductase</keyword>
<keyword id="KW-1185">Reference proteome</keyword>
<dbReference type="EC" id="1.1.1.432" evidence="2"/>
<dbReference type="EMBL" id="AE007870">
    <property type="protein sequence ID" value="AAK90112.1"/>
    <property type="molecule type" value="Genomic_DNA"/>
</dbReference>
<dbReference type="PIR" id="AH2959">
    <property type="entry name" value="AH2959"/>
</dbReference>
<dbReference type="PIR" id="F98323">
    <property type="entry name" value="F98323"/>
</dbReference>
<dbReference type="RefSeq" id="NP_357327.1">
    <property type="nucleotide sequence ID" value="NC_003063.2"/>
</dbReference>
<dbReference type="RefSeq" id="WP_010972906.1">
    <property type="nucleotide sequence ID" value="NC_003063.2"/>
</dbReference>
<dbReference type="PDB" id="7BBY">
    <property type="method" value="X-ray"/>
    <property type="resolution" value="1.83 A"/>
    <property type="chains" value="A=1-297"/>
</dbReference>
<dbReference type="PDB" id="7BBZ">
    <property type="method" value="X-ray"/>
    <property type="resolution" value="1.77 A"/>
    <property type="chains" value="A/B/C=1-297"/>
</dbReference>
<dbReference type="PDB" id="7BC0">
    <property type="method" value="X-ray"/>
    <property type="resolution" value="1.83 A"/>
    <property type="chains" value="A=1-297"/>
</dbReference>
<dbReference type="PDB" id="7BC1">
    <property type="method" value="X-ray"/>
    <property type="resolution" value="1.50 A"/>
    <property type="chains" value="A=1-297"/>
</dbReference>
<dbReference type="PDBsum" id="7BBY"/>
<dbReference type="PDBsum" id="7BBZ"/>
<dbReference type="PDBsum" id="7BC0"/>
<dbReference type="PDBsum" id="7BC1"/>
<dbReference type="SMR" id="A9CEY6"/>
<dbReference type="STRING" id="176299.Atu3278"/>
<dbReference type="EnsemblBacteria" id="AAK90112">
    <property type="protein sequence ID" value="AAK90112"/>
    <property type="gene ID" value="Atu3278"/>
</dbReference>
<dbReference type="GeneID" id="1135152"/>
<dbReference type="KEGG" id="atu:Atu3278"/>
<dbReference type="PATRIC" id="fig|176299.10.peg.3119"/>
<dbReference type="eggNOG" id="COG4989">
    <property type="taxonomic scope" value="Bacteria"/>
</dbReference>
<dbReference type="HOGENOM" id="CLU_023205_8_0_5"/>
<dbReference type="OrthoDB" id="9768793at2"/>
<dbReference type="PhylomeDB" id="A9CEY6"/>
<dbReference type="BioCyc" id="AGRO:ATU3278-MONOMER"/>
<dbReference type="BioCyc" id="MetaCyc:ATU3278-MONOMER"/>
<dbReference type="Proteomes" id="UP000000813">
    <property type="component" value="Chromosome linear"/>
</dbReference>
<dbReference type="GO" id="GO:0005829">
    <property type="term" value="C:cytosol"/>
    <property type="evidence" value="ECO:0007669"/>
    <property type="project" value="TreeGrafter"/>
</dbReference>
<dbReference type="GO" id="GO:0016491">
    <property type="term" value="F:oxidoreductase activity"/>
    <property type="evidence" value="ECO:0007669"/>
    <property type="project" value="UniProtKB-KW"/>
</dbReference>
<dbReference type="CDD" id="cd19092">
    <property type="entry name" value="AKR_BsYcsN_EcYdhF-like"/>
    <property type="match status" value="1"/>
</dbReference>
<dbReference type="Gene3D" id="3.20.20.100">
    <property type="entry name" value="NADP-dependent oxidoreductase domain"/>
    <property type="match status" value="1"/>
</dbReference>
<dbReference type="InterPro" id="IPR020471">
    <property type="entry name" value="AKR"/>
</dbReference>
<dbReference type="InterPro" id="IPR050523">
    <property type="entry name" value="AKR_Detox_Biosynth"/>
</dbReference>
<dbReference type="InterPro" id="IPR018170">
    <property type="entry name" value="Aldo/ket_reductase_CS"/>
</dbReference>
<dbReference type="InterPro" id="IPR023210">
    <property type="entry name" value="NADP_OxRdtase_dom"/>
</dbReference>
<dbReference type="InterPro" id="IPR036812">
    <property type="entry name" value="NADP_OxRdtase_dom_sf"/>
</dbReference>
<dbReference type="PANTHER" id="PTHR43364">
    <property type="entry name" value="NADH-SPECIFIC METHYLGLYOXAL REDUCTASE-RELATED"/>
    <property type="match status" value="1"/>
</dbReference>
<dbReference type="PANTHER" id="PTHR43364:SF1">
    <property type="entry name" value="OXIDOREDUCTASE YDHF"/>
    <property type="match status" value="1"/>
</dbReference>
<dbReference type="Pfam" id="PF00248">
    <property type="entry name" value="Aldo_ket_red"/>
    <property type="match status" value="1"/>
</dbReference>
<dbReference type="PRINTS" id="PR00069">
    <property type="entry name" value="ALDKETRDTASE"/>
</dbReference>
<dbReference type="SUPFAM" id="SSF51430">
    <property type="entry name" value="NAD(P)-linked oxidoreductase"/>
    <property type="match status" value="1"/>
</dbReference>
<dbReference type="PROSITE" id="PS00062">
    <property type="entry name" value="ALDOKETO_REDUCTASE_2"/>
    <property type="match status" value="1"/>
</dbReference>
<comment type="function">
    <text evidence="2">Part of the sulfoquinovose monooxygenase (sulfo-SMO) pathway, a D-sulfoquinovose degradation pathway that enables the complete utilization of all carbons within sulfoquinovose (SQ) with concomitant production of inorganic sulfite (PubMed:35074914). Catalyzes the NADP-dependent reduction of 6-dehydro-D-glucose to D-glucose (PubMed:35074914). Cannot use NADH (PubMed:35074914).</text>
</comment>
<comment type="catalytic activity">
    <reaction evidence="2">
        <text>D-glucose + NADP(+) = 6-dehydro-D-glucose + NADPH + H(+)</text>
        <dbReference type="Rhea" id="RHEA:70779"/>
        <dbReference type="ChEBI" id="CHEBI:4167"/>
        <dbReference type="ChEBI" id="CHEBI:15378"/>
        <dbReference type="ChEBI" id="CHEBI:57783"/>
        <dbReference type="ChEBI" id="CHEBI:58349"/>
        <dbReference type="ChEBI" id="CHEBI:190013"/>
        <dbReference type="EC" id="1.1.1.432"/>
    </reaction>
    <physiologicalReaction direction="right-to-left" evidence="2">
        <dbReference type="Rhea" id="RHEA:70781"/>
    </physiologicalReaction>
</comment>
<comment type="subunit">
    <text evidence="2">Homotrimer.</text>
</comment>
<comment type="induction">
    <text evidence="2">Induced during growth on sulfoquinovose.</text>
</comment>
<comment type="similarity">
    <text evidence="4">Belongs to the aldo/keto reductase family.</text>
</comment>